<proteinExistence type="evidence at protein level"/>
<organism>
    <name type="scientific">Arabidopsis thaliana</name>
    <name type="common">Mouse-ear cress</name>
    <dbReference type="NCBI Taxonomy" id="3702"/>
    <lineage>
        <taxon>Eukaryota</taxon>
        <taxon>Viridiplantae</taxon>
        <taxon>Streptophyta</taxon>
        <taxon>Embryophyta</taxon>
        <taxon>Tracheophyta</taxon>
        <taxon>Spermatophyta</taxon>
        <taxon>Magnoliopsida</taxon>
        <taxon>eudicotyledons</taxon>
        <taxon>Gunneridae</taxon>
        <taxon>Pentapetalae</taxon>
        <taxon>rosids</taxon>
        <taxon>malvids</taxon>
        <taxon>Brassicales</taxon>
        <taxon>Brassicaceae</taxon>
        <taxon>Camelineae</taxon>
        <taxon>Arabidopsis</taxon>
    </lineage>
</organism>
<feature type="chain" id="PRO_0000081431" description="Two-component response regulator ARR15">
    <location>
        <begin position="1"/>
        <end position="206"/>
    </location>
</feature>
<feature type="domain" description="Response regulatory" evidence="1">
    <location>
        <begin position="19"/>
        <end position="146"/>
    </location>
</feature>
<feature type="region of interest" description="Disordered" evidence="2">
    <location>
        <begin position="151"/>
        <end position="206"/>
    </location>
</feature>
<feature type="compositionally biased region" description="Low complexity" evidence="2">
    <location>
        <begin position="168"/>
        <end position="187"/>
    </location>
</feature>
<feature type="modified residue" description="4-aspartylphosphate" evidence="1">
    <location>
        <position position="79"/>
    </location>
</feature>
<gene>
    <name type="primary">ARR15</name>
    <name type="ordered locus">At1g74890</name>
    <name type="ORF">F25A4.14</name>
    <name type="ORF">F9E10.26</name>
</gene>
<sequence length="206" mass="22401">MALRDLSSSLSSSSSPELHVLAVDDSFVDRKVIERLLKISACKVTTVESGTRALQYLGLDGDNGSSGLKDLKVNLIVTDYSMPGLTGYELLKKIKESSALREIPVVIMSSENIQPRIEQCMIEGAEEFLLKPVKLADVKRLKELIMRGGEAEEGKTKKLSPKRILQNDIDSSPSSSSTSSSSSSHDVSSLDDDTPSSKRIKLESRG</sequence>
<dbReference type="EMBL" id="AF305720">
    <property type="protein sequence ID" value="AAG40611.1"/>
    <property type="molecule type" value="mRNA"/>
</dbReference>
<dbReference type="EMBL" id="AC008263">
    <property type="protein sequence ID" value="AAD55287.1"/>
    <property type="molecule type" value="Genomic_DNA"/>
</dbReference>
<dbReference type="EMBL" id="AC013258">
    <property type="protein sequence ID" value="AAG51914.1"/>
    <property type="molecule type" value="Genomic_DNA"/>
</dbReference>
<dbReference type="EMBL" id="CP002684">
    <property type="protein sequence ID" value="AEE35644.1"/>
    <property type="molecule type" value="Genomic_DNA"/>
</dbReference>
<dbReference type="RefSeq" id="NP_177627.1">
    <property type="nucleotide sequence ID" value="NM_106147.2"/>
</dbReference>
<dbReference type="SMR" id="Q7G8V2"/>
<dbReference type="BioGRID" id="29047">
    <property type="interactions" value="12"/>
</dbReference>
<dbReference type="FunCoup" id="Q7G8V2">
    <property type="interactions" value="337"/>
</dbReference>
<dbReference type="IntAct" id="Q7G8V2">
    <property type="interactions" value="14"/>
</dbReference>
<dbReference type="STRING" id="3702.Q7G8V2"/>
<dbReference type="PaxDb" id="3702-AT1G74890.1"/>
<dbReference type="ProteomicsDB" id="246929"/>
<dbReference type="EnsemblPlants" id="AT1G74890.1">
    <property type="protein sequence ID" value="AT1G74890.1"/>
    <property type="gene ID" value="AT1G74890"/>
</dbReference>
<dbReference type="GeneID" id="843828"/>
<dbReference type="Gramene" id="AT1G74890.1">
    <property type="protein sequence ID" value="AT1G74890.1"/>
    <property type="gene ID" value="AT1G74890"/>
</dbReference>
<dbReference type="KEGG" id="ath:AT1G74890"/>
<dbReference type="Araport" id="AT1G74890"/>
<dbReference type="TAIR" id="AT1G74890">
    <property type="gene designation" value="ARR15"/>
</dbReference>
<dbReference type="eggNOG" id="KOG1601">
    <property type="taxonomic scope" value="Eukaryota"/>
</dbReference>
<dbReference type="HOGENOM" id="CLU_000445_69_5_1"/>
<dbReference type="InParanoid" id="Q7G8V2"/>
<dbReference type="OMA" id="DKAKHSY"/>
<dbReference type="PhylomeDB" id="Q7G8V2"/>
<dbReference type="PRO" id="PR:Q7G8V2"/>
<dbReference type="Proteomes" id="UP000006548">
    <property type="component" value="Chromosome 1"/>
</dbReference>
<dbReference type="ExpressionAtlas" id="Q7G8V2">
    <property type="expression patterns" value="baseline and differential"/>
</dbReference>
<dbReference type="GO" id="GO:0005737">
    <property type="term" value="C:cytoplasm"/>
    <property type="evidence" value="ECO:0000314"/>
    <property type="project" value="TAIR"/>
</dbReference>
<dbReference type="GO" id="GO:0005634">
    <property type="term" value="C:nucleus"/>
    <property type="evidence" value="ECO:0000314"/>
    <property type="project" value="TAIR"/>
</dbReference>
<dbReference type="GO" id="GO:0000156">
    <property type="term" value="F:phosphorelay response regulator activity"/>
    <property type="evidence" value="ECO:0000250"/>
    <property type="project" value="TAIR"/>
</dbReference>
<dbReference type="GO" id="GO:0009736">
    <property type="term" value="P:cytokinin-activated signaling pathway"/>
    <property type="evidence" value="ECO:0000304"/>
    <property type="project" value="TAIR"/>
</dbReference>
<dbReference type="GO" id="GO:0006355">
    <property type="term" value="P:regulation of DNA-templated transcription"/>
    <property type="evidence" value="ECO:0000304"/>
    <property type="project" value="TAIR"/>
</dbReference>
<dbReference type="GO" id="GO:0009735">
    <property type="term" value="P:response to cytokinin"/>
    <property type="evidence" value="ECO:0000270"/>
    <property type="project" value="TAIR"/>
</dbReference>
<dbReference type="CDD" id="cd17581">
    <property type="entry name" value="REC_typeA_ARR"/>
    <property type="match status" value="1"/>
</dbReference>
<dbReference type="FunFam" id="3.40.50.2300:FF:000184">
    <property type="entry name" value="Response regulator 3"/>
    <property type="match status" value="1"/>
</dbReference>
<dbReference type="Gene3D" id="3.40.50.2300">
    <property type="match status" value="1"/>
</dbReference>
<dbReference type="InterPro" id="IPR045279">
    <property type="entry name" value="ARR-like"/>
</dbReference>
<dbReference type="InterPro" id="IPR011006">
    <property type="entry name" value="CheY-like_superfamily"/>
</dbReference>
<dbReference type="InterPro" id="IPR001789">
    <property type="entry name" value="Sig_transdc_resp-reg_receiver"/>
</dbReference>
<dbReference type="PANTHER" id="PTHR43874">
    <property type="entry name" value="TWO-COMPONENT RESPONSE REGULATOR"/>
    <property type="match status" value="1"/>
</dbReference>
<dbReference type="PANTHER" id="PTHR43874:SF199">
    <property type="entry name" value="TWO-COMPONENT RESPONSE REGULATOR ARR15"/>
    <property type="match status" value="1"/>
</dbReference>
<dbReference type="Pfam" id="PF00072">
    <property type="entry name" value="Response_reg"/>
    <property type="match status" value="1"/>
</dbReference>
<dbReference type="SMART" id="SM00448">
    <property type="entry name" value="REC"/>
    <property type="match status" value="1"/>
</dbReference>
<dbReference type="SUPFAM" id="SSF52172">
    <property type="entry name" value="CheY-like"/>
    <property type="match status" value="1"/>
</dbReference>
<dbReference type="PROSITE" id="PS50110">
    <property type="entry name" value="RESPONSE_REGULATORY"/>
    <property type="match status" value="1"/>
</dbReference>
<reference key="1">
    <citation type="journal article" date="2000" name="Plant Physiol.">
        <title>Characterization of the response of the Arabidopsis response regulator gene family to cytokinin.</title>
        <authorList>
            <person name="D'Agostino I.B."/>
            <person name="Deruere J."/>
            <person name="Kieber J.J."/>
        </authorList>
    </citation>
    <scope>NUCLEOTIDE SEQUENCE</scope>
    <scope>INDUCTION</scope>
    <source>
        <strain>cv. Columbia</strain>
    </source>
</reference>
<reference key="2">
    <citation type="journal article" date="2000" name="Nature">
        <title>Sequence and analysis of chromosome 1 of the plant Arabidopsis thaliana.</title>
        <authorList>
            <person name="Theologis A."/>
            <person name="Ecker J.R."/>
            <person name="Palm C.J."/>
            <person name="Federspiel N.A."/>
            <person name="Kaul S."/>
            <person name="White O."/>
            <person name="Alonso J."/>
            <person name="Altafi H."/>
            <person name="Araujo R."/>
            <person name="Bowman C.L."/>
            <person name="Brooks S.Y."/>
            <person name="Buehler E."/>
            <person name="Chan A."/>
            <person name="Chao Q."/>
            <person name="Chen H."/>
            <person name="Cheuk R.F."/>
            <person name="Chin C.W."/>
            <person name="Chung M.K."/>
            <person name="Conn L."/>
            <person name="Conway A.B."/>
            <person name="Conway A.R."/>
            <person name="Creasy T.H."/>
            <person name="Dewar K."/>
            <person name="Dunn P."/>
            <person name="Etgu P."/>
            <person name="Feldblyum T.V."/>
            <person name="Feng J.-D."/>
            <person name="Fong B."/>
            <person name="Fujii C.Y."/>
            <person name="Gill J.E."/>
            <person name="Goldsmith A.D."/>
            <person name="Haas B."/>
            <person name="Hansen N.F."/>
            <person name="Hughes B."/>
            <person name="Huizar L."/>
            <person name="Hunter J.L."/>
            <person name="Jenkins J."/>
            <person name="Johnson-Hopson C."/>
            <person name="Khan S."/>
            <person name="Khaykin E."/>
            <person name="Kim C.J."/>
            <person name="Koo H.L."/>
            <person name="Kremenetskaia I."/>
            <person name="Kurtz D.B."/>
            <person name="Kwan A."/>
            <person name="Lam B."/>
            <person name="Langin-Hooper S."/>
            <person name="Lee A."/>
            <person name="Lee J.M."/>
            <person name="Lenz C.A."/>
            <person name="Li J.H."/>
            <person name="Li Y.-P."/>
            <person name="Lin X."/>
            <person name="Liu S.X."/>
            <person name="Liu Z.A."/>
            <person name="Luros J.S."/>
            <person name="Maiti R."/>
            <person name="Marziali A."/>
            <person name="Militscher J."/>
            <person name="Miranda M."/>
            <person name="Nguyen M."/>
            <person name="Nierman W.C."/>
            <person name="Osborne B.I."/>
            <person name="Pai G."/>
            <person name="Peterson J."/>
            <person name="Pham P.K."/>
            <person name="Rizzo M."/>
            <person name="Rooney T."/>
            <person name="Rowley D."/>
            <person name="Sakano H."/>
            <person name="Salzberg S.L."/>
            <person name="Schwartz J.R."/>
            <person name="Shinn P."/>
            <person name="Southwick A.M."/>
            <person name="Sun H."/>
            <person name="Tallon L.J."/>
            <person name="Tambunga G."/>
            <person name="Toriumi M.J."/>
            <person name="Town C.D."/>
            <person name="Utterback T."/>
            <person name="Van Aken S."/>
            <person name="Vaysberg M."/>
            <person name="Vysotskaia V.S."/>
            <person name="Walker M."/>
            <person name="Wu D."/>
            <person name="Yu G."/>
            <person name="Fraser C.M."/>
            <person name="Venter J.C."/>
            <person name="Davis R.W."/>
        </authorList>
    </citation>
    <scope>NUCLEOTIDE SEQUENCE [LARGE SCALE GENOMIC DNA]</scope>
    <source>
        <strain>cv. Columbia</strain>
    </source>
</reference>
<reference key="3">
    <citation type="journal article" date="2017" name="Plant J.">
        <title>Araport11: a complete reannotation of the Arabidopsis thaliana reference genome.</title>
        <authorList>
            <person name="Cheng C.Y."/>
            <person name="Krishnakumar V."/>
            <person name="Chan A.P."/>
            <person name="Thibaud-Nissen F."/>
            <person name="Schobel S."/>
            <person name="Town C.D."/>
        </authorList>
    </citation>
    <scope>GENOME REANNOTATION</scope>
    <source>
        <strain>cv. Columbia</strain>
    </source>
</reference>
<reference key="4">
    <citation type="journal article" date="2002" name="Plant Cell Physiol.">
        <title>Characterization of the ARR15 and ARR16 response regulators with special reference to the cytokinin signaling pathway mediated by the AHK4 histidine kinase in roots of Arabidopsis thaliana.</title>
        <authorList>
            <person name="Kiba T."/>
            <person name="Yamada H."/>
            <person name="Mizuno T."/>
        </authorList>
    </citation>
    <scope>FUNCTION</scope>
    <scope>SUBCELLULAR LOCATION</scope>
    <scope>INDUCTION</scope>
</reference>
<reference key="5">
    <citation type="journal article" date="2003" name="Plant Cell Physiol.">
        <title>The type-A response regulator, ARR15, acts as a negative regulator in the cytokinin-mediated signal transduction in Arabidopsis thaliana.</title>
        <authorList>
            <person name="Kiba T."/>
            <person name="Yamada H."/>
            <person name="Sato S."/>
            <person name="Kato T."/>
            <person name="Tabata S."/>
            <person name="Yamashino T."/>
            <person name="Mizuno T."/>
        </authorList>
    </citation>
    <scope>FUNCTION</scope>
</reference>
<reference key="6">
    <citation type="journal article" date="2004" name="Plant Cell">
        <title>Type-A Arabidopsis response regulators are partially redundant negative regulators of cytokinin signaling.</title>
        <authorList>
            <person name="To J.P.C."/>
            <person name="Haberer G."/>
            <person name="Ferreira F.J."/>
            <person name="Deruere J."/>
            <person name="Mason M.G."/>
            <person name="Schaller G.E."/>
            <person name="Alonso J.M."/>
            <person name="Ecker J.R."/>
            <person name="Kieber J.J."/>
        </authorList>
    </citation>
    <scope>FUNCTION</scope>
</reference>
<accession>Q7G8V2</accession>
<protein>
    <recommendedName>
        <fullName>Two-component response regulator ARR15</fullName>
    </recommendedName>
</protein>
<comment type="function">
    <text evidence="4 5 6">Functions as a response regulator involved in His-to-Asp phosphorelay signal transduction system. Phosphorylation of the Asp residue in the receiver domain activates the ability of the protein to promote the transcription of target genes. Type-A response regulators seem to act as negative regulators of the cytokinin signaling.</text>
</comment>
<comment type="interaction">
    <interactant intactId="EBI-1100967">
        <id>Q7G8V2</id>
    </interactant>
    <interactant intactId="EBI-1100725">
        <id>Q67XQ1</id>
        <label>At1g03430</label>
    </interactant>
    <organismsDiffer>false</organismsDiffer>
    <experiments>2</experiments>
</comment>
<comment type="interaction">
    <interactant intactId="EBI-1100967">
        <id>Q7G8V2</id>
    </interactant>
    <interactant intactId="EBI-1807790">
        <id>Q9SSW0</id>
        <label>AZF3</label>
    </interactant>
    <organismsDiffer>false</organismsDiffer>
    <experiments>2</experiments>
</comment>
<comment type="interaction">
    <interactant intactId="EBI-1100967">
        <id>Q7G8V2</id>
    </interactant>
    <interactant intactId="EBI-1998000">
        <id>Q9C5A5</id>
        <label>HCF145</label>
    </interactant>
    <organismsDiffer>false</organismsDiffer>
    <experiments>3</experiments>
</comment>
<comment type="interaction">
    <interactant intactId="EBI-1100967">
        <id>Q7G8V2</id>
    </interactant>
    <interactant intactId="EBI-4426144">
        <id>Q9C9L2</id>
        <label>TCP15</label>
    </interactant>
    <organismsDiffer>false</organismsDiffer>
    <experiments>3</experiments>
</comment>
<comment type="subcellular location">
    <subcellularLocation>
        <location evidence="4">Nucleus</location>
    </subcellularLocation>
</comment>
<comment type="induction">
    <text evidence="3 4">By cytokinin (BA) in roots.</text>
</comment>
<comment type="PTM">
    <text>Two-component system major event consists of a His-to-Asp phosphorelay between a sensor histidine kinase (HK) and a response regulator (RR). In plants, the His-to-Asp phosphorelay involves an additional intermediate named Histidine-containing phosphotransfer protein (HPt). This multistep phosphorelay consists of a His-Asp-His-Asp sequential transfer of a phosphate group between first a His and an Asp of the HK protein, followed by the transfer to a conserved His of the HPt protein and finally the transfer to an Asp in the receiver domain of the RR protein.</text>
</comment>
<comment type="similarity">
    <text evidence="7">Belongs to the ARR family. Type-A subfamily.</text>
</comment>
<evidence type="ECO:0000255" key="1">
    <source>
        <dbReference type="PROSITE-ProRule" id="PRU00169"/>
    </source>
</evidence>
<evidence type="ECO:0000256" key="2">
    <source>
        <dbReference type="SAM" id="MobiDB-lite"/>
    </source>
</evidence>
<evidence type="ECO:0000269" key="3">
    <source>
    </source>
</evidence>
<evidence type="ECO:0000269" key="4">
    <source>
    </source>
</evidence>
<evidence type="ECO:0000269" key="5">
    <source>
    </source>
</evidence>
<evidence type="ECO:0000269" key="6">
    <source>
    </source>
</evidence>
<evidence type="ECO:0000305" key="7"/>
<keyword id="KW-0932">Cytokinin signaling pathway</keyword>
<keyword id="KW-0539">Nucleus</keyword>
<keyword id="KW-0597">Phosphoprotein</keyword>
<keyword id="KW-1185">Reference proteome</keyword>
<keyword id="KW-0804">Transcription</keyword>
<keyword id="KW-0805">Transcription regulation</keyword>
<keyword id="KW-0902">Two-component regulatory system</keyword>
<name>ARR15_ARATH</name>